<accession>Q8ZN75</accession>
<evidence type="ECO:0000250" key="1"/>
<evidence type="ECO:0000269" key="2">
    <source>
    </source>
</evidence>
<evidence type="ECO:0000305" key="3"/>
<feature type="chain" id="PRO_0000375723" description="Succinyl-diaminopimelate desuccinylase">
    <location>
        <begin position="1"/>
        <end position="375"/>
    </location>
</feature>
<feature type="active site" evidence="1">
    <location>
        <position position="68"/>
    </location>
</feature>
<feature type="active site" description="Proton acceptor" evidence="1">
    <location>
        <position position="133"/>
    </location>
</feature>
<feature type="binding site" evidence="1">
    <location>
        <position position="66"/>
    </location>
    <ligand>
        <name>Zn(2+)</name>
        <dbReference type="ChEBI" id="CHEBI:29105"/>
        <label>1</label>
    </ligand>
</feature>
<feature type="binding site" evidence="1">
    <location>
        <position position="99"/>
    </location>
    <ligand>
        <name>Zn(2+)</name>
        <dbReference type="ChEBI" id="CHEBI:29105"/>
        <label>1</label>
    </ligand>
</feature>
<feature type="binding site" evidence="1">
    <location>
        <position position="99"/>
    </location>
    <ligand>
        <name>Zn(2+)</name>
        <dbReference type="ChEBI" id="CHEBI:29105"/>
        <label>2</label>
    </ligand>
</feature>
<feature type="binding site" evidence="1">
    <location>
        <position position="134"/>
    </location>
    <ligand>
        <name>Zn(2+)</name>
        <dbReference type="ChEBI" id="CHEBI:29105"/>
        <label>2</label>
    </ligand>
</feature>
<feature type="binding site" evidence="1">
    <location>
        <position position="162"/>
    </location>
    <ligand>
        <name>Zn(2+)</name>
        <dbReference type="ChEBI" id="CHEBI:29105"/>
        <label>1</label>
    </ligand>
</feature>
<feature type="binding site" evidence="1">
    <location>
        <position position="348"/>
    </location>
    <ligand>
        <name>Zn(2+)</name>
        <dbReference type="ChEBI" id="CHEBI:29105"/>
        <label>2</label>
    </ligand>
</feature>
<dbReference type="EC" id="3.5.1.18"/>
<dbReference type="EMBL" id="AE006468">
    <property type="protein sequence ID" value="AAL21377.1"/>
    <property type="molecule type" value="Genomic_DNA"/>
</dbReference>
<dbReference type="RefSeq" id="NP_461418.1">
    <property type="nucleotide sequence ID" value="NC_003197.2"/>
</dbReference>
<dbReference type="RefSeq" id="WP_001277825.1">
    <property type="nucleotide sequence ID" value="NC_003197.2"/>
</dbReference>
<dbReference type="SMR" id="Q8ZN75"/>
<dbReference type="STRING" id="99287.STM2483"/>
<dbReference type="MEROPS" id="M20.010"/>
<dbReference type="PaxDb" id="99287-STM2483"/>
<dbReference type="GeneID" id="1254005"/>
<dbReference type="KEGG" id="stm:STM2483"/>
<dbReference type="PATRIC" id="fig|99287.12.peg.2621"/>
<dbReference type="HOGENOM" id="CLU_021802_4_0_6"/>
<dbReference type="OMA" id="PKYGWTD"/>
<dbReference type="PhylomeDB" id="Q8ZN75"/>
<dbReference type="BioCyc" id="SENT99287:STM2483-MONOMER"/>
<dbReference type="SABIO-RK" id="Q8ZN75"/>
<dbReference type="UniPathway" id="UPA00034">
    <property type="reaction ID" value="UER00021"/>
</dbReference>
<dbReference type="Proteomes" id="UP000001014">
    <property type="component" value="Chromosome"/>
</dbReference>
<dbReference type="GO" id="GO:0005829">
    <property type="term" value="C:cytosol"/>
    <property type="evidence" value="ECO:0000318"/>
    <property type="project" value="GO_Central"/>
</dbReference>
<dbReference type="GO" id="GO:0050897">
    <property type="term" value="F:cobalt ion binding"/>
    <property type="evidence" value="ECO:0007669"/>
    <property type="project" value="UniProtKB-UniRule"/>
</dbReference>
<dbReference type="GO" id="GO:0016805">
    <property type="term" value="F:dipeptidase activity"/>
    <property type="evidence" value="ECO:0007669"/>
    <property type="project" value="UniProtKB-KW"/>
</dbReference>
<dbReference type="GO" id="GO:0008237">
    <property type="term" value="F:metallopeptidase activity"/>
    <property type="evidence" value="ECO:0007669"/>
    <property type="project" value="UniProtKB-KW"/>
</dbReference>
<dbReference type="GO" id="GO:0009014">
    <property type="term" value="F:succinyl-diaminopimelate desuccinylase activity"/>
    <property type="evidence" value="ECO:0000318"/>
    <property type="project" value="GO_Central"/>
</dbReference>
<dbReference type="GO" id="GO:0008270">
    <property type="term" value="F:zinc ion binding"/>
    <property type="evidence" value="ECO:0007669"/>
    <property type="project" value="UniProtKB-UniRule"/>
</dbReference>
<dbReference type="GO" id="GO:0019877">
    <property type="term" value="P:diaminopimelate biosynthetic process"/>
    <property type="evidence" value="ECO:0007669"/>
    <property type="project" value="UniProtKB-UniRule"/>
</dbReference>
<dbReference type="GO" id="GO:0009089">
    <property type="term" value="P:lysine biosynthetic process via diaminopimelate"/>
    <property type="evidence" value="ECO:0000318"/>
    <property type="project" value="GO_Central"/>
</dbReference>
<dbReference type="GO" id="GO:0006508">
    <property type="term" value="P:proteolysis"/>
    <property type="evidence" value="ECO:0007669"/>
    <property type="project" value="UniProtKB-KW"/>
</dbReference>
<dbReference type="CDD" id="cd03891">
    <property type="entry name" value="M20_DapE_proteobac"/>
    <property type="match status" value="1"/>
</dbReference>
<dbReference type="FunFam" id="3.30.70.360:FF:000011">
    <property type="entry name" value="Succinyl-diaminopimelate desuccinylase"/>
    <property type="match status" value="1"/>
</dbReference>
<dbReference type="FunFam" id="3.40.630.10:FF:000005">
    <property type="entry name" value="Succinyl-diaminopimelate desuccinylase"/>
    <property type="match status" value="1"/>
</dbReference>
<dbReference type="FunFam" id="3.40.630.10:FF:000010">
    <property type="entry name" value="Succinyl-diaminopimelate desuccinylase"/>
    <property type="match status" value="1"/>
</dbReference>
<dbReference type="Gene3D" id="3.40.630.10">
    <property type="entry name" value="Zn peptidases"/>
    <property type="match status" value="2"/>
</dbReference>
<dbReference type="HAMAP" id="MF_01690">
    <property type="entry name" value="DapE"/>
    <property type="match status" value="1"/>
</dbReference>
<dbReference type="InterPro" id="IPR001261">
    <property type="entry name" value="ArgE/DapE_CS"/>
</dbReference>
<dbReference type="InterPro" id="IPR036264">
    <property type="entry name" value="Bact_exopeptidase_dim_dom"/>
</dbReference>
<dbReference type="InterPro" id="IPR005941">
    <property type="entry name" value="DapE_proteobac"/>
</dbReference>
<dbReference type="InterPro" id="IPR002933">
    <property type="entry name" value="Peptidase_M20"/>
</dbReference>
<dbReference type="InterPro" id="IPR011650">
    <property type="entry name" value="Peptidase_M20_dimer"/>
</dbReference>
<dbReference type="InterPro" id="IPR050072">
    <property type="entry name" value="Peptidase_M20A"/>
</dbReference>
<dbReference type="NCBIfam" id="TIGR01246">
    <property type="entry name" value="dapE_proteo"/>
    <property type="match status" value="1"/>
</dbReference>
<dbReference type="NCBIfam" id="NF009557">
    <property type="entry name" value="PRK13009.1"/>
    <property type="match status" value="1"/>
</dbReference>
<dbReference type="PANTHER" id="PTHR43808">
    <property type="entry name" value="ACETYLORNITHINE DEACETYLASE"/>
    <property type="match status" value="1"/>
</dbReference>
<dbReference type="PANTHER" id="PTHR43808:SF31">
    <property type="entry name" value="N-ACETYL-L-CITRULLINE DEACETYLASE"/>
    <property type="match status" value="1"/>
</dbReference>
<dbReference type="Pfam" id="PF07687">
    <property type="entry name" value="M20_dimer"/>
    <property type="match status" value="1"/>
</dbReference>
<dbReference type="Pfam" id="PF01546">
    <property type="entry name" value="Peptidase_M20"/>
    <property type="match status" value="1"/>
</dbReference>
<dbReference type="SUPFAM" id="SSF55031">
    <property type="entry name" value="Bacterial exopeptidase dimerisation domain"/>
    <property type="match status" value="1"/>
</dbReference>
<dbReference type="SUPFAM" id="SSF53187">
    <property type="entry name" value="Zn-dependent exopeptidases"/>
    <property type="match status" value="1"/>
</dbReference>
<dbReference type="PROSITE" id="PS00758">
    <property type="entry name" value="ARGE_DAPE_CPG2_1"/>
    <property type="match status" value="1"/>
</dbReference>
<dbReference type="PROSITE" id="PS00759">
    <property type="entry name" value="ARGE_DAPE_CPG2_2"/>
    <property type="match status" value="1"/>
</dbReference>
<sequence>MSCPVIELTQQLIRRPSLSPDDAGCQALMIERLRKIGFTIEHMDFGDTQNFWAWRGRGETLAFAGHTDVVPAGDVDRWINPPFEPTIRDGMLFGRGAADMKGSLAAMVVAAERFVAQHPHHRGRLAFLITSDEEASAKNGTVKVVEALMARNERLDYCLVGEPSSTEIVGDVVKNGRRGSLTCNLTIHGVQGHVAYPHLADNPVHRAAPFLNELVAIEWDRGNDFFPATSMQVANIQAGTGSNNVIPGELFVQFNFRFSTELTDEMIKERVHALLEKHQLRYTVDWWLSGQPFLTARGKLVDAVVNAIEHYNEIKPQLLTTGGTSDGRFIARMGAQVVELGPVNATIHKINECVNAADLQLLARMYQRIMEQLVA</sequence>
<keyword id="KW-0028">Amino-acid biosynthesis</keyword>
<keyword id="KW-0170">Cobalt</keyword>
<keyword id="KW-0220">Diaminopimelate biosynthesis</keyword>
<keyword id="KW-0224">Dipeptidase</keyword>
<keyword id="KW-0378">Hydrolase</keyword>
<keyword id="KW-0457">Lysine biosynthesis</keyword>
<keyword id="KW-0464">Manganese</keyword>
<keyword id="KW-0479">Metal-binding</keyword>
<keyword id="KW-0482">Metalloprotease</keyword>
<keyword id="KW-0645">Protease</keyword>
<keyword id="KW-1185">Reference proteome</keyword>
<keyword id="KW-0862">Zinc</keyword>
<comment type="function">
    <text evidence="2">Catalyzes the hydrolysis of N-succinyl-L,L-diaminopimelic acid (SDAP), forming succinate and LL-2,6-diaminopimelate (DAP), an intermediate involved in the bacterial biosynthesis of lysine and meso-diaminopimelic acid, an essential component of bacterial cell walls. Can also hydrolyze all N-terminal Asp dipeptides except Asp-Pro. Asp-Ser is the best substrate, followed by Asp-Gly, Asp-Leu, and Asp-Cys.</text>
</comment>
<comment type="catalytic activity">
    <reaction>
        <text>N-succinyl-(2S,6S)-2,6-diaminopimelate + H2O = (2S,6S)-2,6-diaminopimelate + succinate</text>
        <dbReference type="Rhea" id="RHEA:22608"/>
        <dbReference type="ChEBI" id="CHEBI:15377"/>
        <dbReference type="ChEBI" id="CHEBI:30031"/>
        <dbReference type="ChEBI" id="CHEBI:57609"/>
        <dbReference type="ChEBI" id="CHEBI:58087"/>
        <dbReference type="EC" id="3.5.1.18"/>
    </reaction>
</comment>
<comment type="cofactor">
    <cofactor evidence="2">
        <name>Zn(2+)</name>
        <dbReference type="ChEBI" id="CHEBI:29105"/>
    </cofactor>
    <cofactor evidence="2">
        <name>Co(2+)</name>
        <dbReference type="ChEBI" id="CHEBI:48828"/>
    </cofactor>
    <cofactor evidence="2">
        <name>Mn(2+)</name>
        <dbReference type="ChEBI" id="CHEBI:29035"/>
    </cofactor>
    <text evidence="2">Binds 2 divalent cations per subunit, one with high affinity and the other with lower affinity. Zn(2+) and/or Co(2+) ions are used for desuccinylase activity. The form of DapE active as a peptidase contains Zn(2+) in the high-affinity site and Mn(2+) in the low-affinity site.</text>
</comment>
<comment type="activity regulation">
    <text evidence="2">Mn(2+)-activated peptidase is inhibited by Mn(2+) at concentration above 1 mM and by increasing concnentrations of Co(2+). There is a competitive inhibitor effect between the substrates. Hydrolysis of Asp-Leu by Mn(2+)-activated DapE is inhibited by SDAP, and hydrolysis of SDAP by Co(2+)-activated DapE is inhibited by Asp-Ser.</text>
</comment>
<comment type="biophysicochemical properties">
    <kinetics>
        <KM evidence="2">0.63 mM for SDAP (in the presence of 1 mM Co(2+))</KM>
        <KM evidence="2">0.66 mM for Asp-Ser (in the presence of 1 mM Mn(2+))</KM>
        <KM evidence="2">3.3 mM for Asp-Leu (in the presence of 1 mM Mn(2+))</KM>
    </kinetics>
</comment>
<comment type="pathway">
    <text>Amino-acid biosynthesis; L-lysine biosynthesis via DAP pathway; LL-2,6-diaminopimelate from (S)-tetrahydrodipicolinate (succinylase route): step 3/3.</text>
</comment>
<comment type="subunit">
    <text evidence="1">Homodimer.</text>
</comment>
<comment type="miscellaneous">
    <text>Zn(+2) is usually found in the tight binding site, but the nature of the second cation in the low affinity binding site is different according the activity.</text>
</comment>
<comment type="similarity">
    <text evidence="3">Belongs to the peptidase M20A family. DapE subfamily.</text>
</comment>
<organism>
    <name type="scientific">Salmonella typhimurium (strain LT2 / SGSC1412 / ATCC 700720)</name>
    <dbReference type="NCBI Taxonomy" id="99287"/>
    <lineage>
        <taxon>Bacteria</taxon>
        <taxon>Pseudomonadati</taxon>
        <taxon>Pseudomonadota</taxon>
        <taxon>Gammaproteobacteria</taxon>
        <taxon>Enterobacterales</taxon>
        <taxon>Enterobacteriaceae</taxon>
        <taxon>Salmonella</taxon>
    </lineage>
</organism>
<name>DAPE_SALTY</name>
<proteinExistence type="evidence at protein level"/>
<protein>
    <recommendedName>
        <fullName>Succinyl-diaminopimelate desuccinylase</fullName>
        <shortName>SDAP desuccinylase</shortName>
        <ecNumber>3.5.1.18</ecNumber>
    </recommendedName>
    <alternativeName>
        <fullName>Aspartyl peptidase</fullName>
    </alternativeName>
    <alternativeName>
        <fullName>N-succinyl-LL-2,6-diaminoheptanedioate amidohydrolase</fullName>
    </alternativeName>
</protein>
<reference key="1">
    <citation type="journal article" date="2001" name="Nature">
        <title>Complete genome sequence of Salmonella enterica serovar Typhimurium LT2.</title>
        <authorList>
            <person name="McClelland M."/>
            <person name="Sanderson K.E."/>
            <person name="Spieth J."/>
            <person name="Clifton S.W."/>
            <person name="Latreille P."/>
            <person name="Courtney L."/>
            <person name="Porwollik S."/>
            <person name="Ali J."/>
            <person name="Dante M."/>
            <person name="Du F."/>
            <person name="Hou S."/>
            <person name="Layman D."/>
            <person name="Leonard S."/>
            <person name="Nguyen C."/>
            <person name="Scott K."/>
            <person name="Holmes A."/>
            <person name="Grewal N."/>
            <person name="Mulvaney E."/>
            <person name="Ryan E."/>
            <person name="Sun H."/>
            <person name="Florea L."/>
            <person name="Miller W."/>
            <person name="Stoneking T."/>
            <person name="Nhan M."/>
            <person name="Waterston R."/>
            <person name="Wilson R.K."/>
        </authorList>
    </citation>
    <scope>NUCLEOTIDE SEQUENCE [LARGE SCALE GENOMIC DNA]</scope>
    <source>
        <strain>LT2 / SGSC1412 / ATCC 700720</strain>
    </source>
</reference>
<reference key="2">
    <citation type="journal article" date="2003" name="J. Bacteriol.">
        <title>DapE can function as an aspartyl peptidase in the presence of Mn2+.</title>
        <authorList>
            <person name="Broder D.H."/>
            <person name="Miller C.G."/>
        </authorList>
    </citation>
    <scope>FUNCTION</scope>
    <scope>BIOPHYSICOCHEMICAL PROPERTIES</scope>
    <scope>ACTIVITY REGULATION</scope>
    <scope>COFACTOR</scope>
    <scope>SUBSTRATE SPECIFICITY</scope>
</reference>
<gene>
    <name type="primary">dapE</name>
    <name type="ordered locus">STM2483</name>
</gene>